<sequence>MTQPDMSQILAQAQQMQAQLQAAQQEILASSVVGDAANGLVTVTMSGSGEVTAVNIDPKVVDPEDVETLQDLVQGAFLDAHKKVADLAQEKMGPLSQGFGGDMGSLF</sequence>
<accession>Q8FU11</accession>
<name>Y210_COREF</name>
<keyword id="KW-0963">Cytoplasm</keyword>
<keyword id="KW-0238">DNA-binding</keyword>
<keyword id="KW-1185">Reference proteome</keyword>
<comment type="function">
    <text evidence="1">Binds to DNA and alters its conformation. May be involved in regulation of gene expression, nucleoid organization and DNA protection.</text>
</comment>
<comment type="subunit">
    <text evidence="1">Homodimer.</text>
</comment>
<comment type="subcellular location">
    <subcellularLocation>
        <location evidence="1">Cytoplasm</location>
        <location evidence="1">Nucleoid</location>
    </subcellularLocation>
</comment>
<comment type="similarity">
    <text evidence="1">Belongs to the YbaB/EbfC family.</text>
</comment>
<comment type="sequence caution" evidence="2">
    <conflict type="erroneous initiation">
        <sequence resource="EMBL-CDS" id="BAC17020"/>
    </conflict>
</comment>
<organism>
    <name type="scientific">Corynebacterium efficiens (strain DSM 44549 / YS-314 / AJ 12310 / JCM 11189 / NBRC 100395)</name>
    <dbReference type="NCBI Taxonomy" id="196164"/>
    <lineage>
        <taxon>Bacteria</taxon>
        <taxon>Bacillati</taxon>
        <taxon>Actinomycetota</taxon>
        <taxon>Actinomycetes</taxon>
        <taxon>Mycobacteriales</taxon>
        <taxon>Corynebacteriaceae</taxon>
        <taxon>Corynebacterium</taxon>
    </lineage>
</organism>
<reference key="1">
    <citation type="journal article" date="2003" name="Genome Res.">
        <title>Comparative complete genome sequence analysis of the amino acid replacements responsible for the thermostability of Corynebacterium efficiens.</title>
        <authorList>
            <person name="Nishio Y."/>
            <person name="Nakamura Y."/>
            <person name="Kawarabayasi Y."/>
            <person name="Usuda Y."/>
            <person name="Kimura E."/>
            <person name="Sugimoto S."/>
            <person name="Matsui K."/>
            <person name="Yamagishi A."/>
            <person name="Kikuchi H."/>
            <person name="Ikeo K."/>
            <person name="Gojobori T."/>
        </authorList>
    </citation>
    <scope>NUCLEOTIDE SEQUENCE [LARGE SCALE GENOMIC DNA]</scope>
    <source>
        <strain>DSM 44549 / YS-314 / AJ 12310 / JCM 11189 / NBRC 100395</strain>
    </source>
</reference>
<evidence type="ECO:0000255" key="1">
    <source>
        <dbReference type="HAMAP-Rule" id="MF_00274"/>
    </source>
</evidence>
<evidence type="ECO:0000305" key="2"/>
<feature type="chain" id="PRO_0000170387" description="Nucleoid-associated protein CE0210">
    <location>
        <begin position="1"/>
        <end position="107"/>
    </location>
</feature>
<gene>
    <name type="ordered locus">CE0210</name>
</gene>
<dbReference type="EMBL" id="BA000035">
    <property type="protein sequence ID" value="BAC17020.1"/>
    <property type="status" value="ALT_INIT"/>
    <property type="molecule type" value="Genomic_DNA"/>
</dbReference>
<dbReference type="RefSeq" id="WP_006768479.1">
    <property type="nucleotide sequence ID" value="NC_004369.1"/>
</dbReference>
<dbReference type="SMR" id="Q8FU11"/>
<dbReference type="STRING" id="196164.gene:10740606"/>
<dbReference type="KEGG" id="cef:CE0210"/>
<dbReference type="eggNOG" id="COG0718">
    <property type="taxonomic scope" value="Bacteria"/>
</dbReference>
<dbReference type="HOGENOM" id="CLU_140930_4_1_11"/>
<dbReference type="OrthoDB" id="9809370at2"/>
<dbReference type="Proteomes" id="UP000001409">
    <property type="component" value="Chromosome"/>
</dbReference>
<dbReference type="GO" id="GO:0043590">
    <property type="term" value="C:bacterial nucleoid"/>
    <property type="evidence" value="ECO:0007669"/>
    <property type="project" value="UniProtKB-UniRule"/>
</dbReference>
<dbReference type="GO" id="GO:0005829">
    <property type="term" value="C:cytosol"/>
    <property type="evidence" value="ECO:0007669"/>
    <property type="project" value="TreeGrafter"/>
</dbReference>
<dbReference type="GO" id="GO:0003677">
    <property type="term" value="F:DNA binding"/>
    <property type="evidence" value="ECO:0007669"/>
    <property type="project" value="UniProtKB-UniRule"/>
</dbReference>
<dbReference type="Gene3D" id="3.30.1310.10">
    <property type="entry name" value="Nucleoid-associated protein YbaB-like domain"/>
    <property type="match status" value="1"/>
</dbReference>
<dbReference type="HAMAP" id="MF_00274">
    <property type="entry name" value="DNA_YbaB_EbfC"/>
    <property type="match status" value="1"/>
</dbReference>
<dbReference type="InterPro" id="IPR036894">
    <property type="entry name" value="YbaB-like_sf"/>
</dbReference>
<dbReference type="InterPro" id="IPR004401">
    <property type="entry name" value="YbaB/EbfC"/>
</dbReference>
<dbReference type="NCBIfam" id="TIGR00103">
    <property type="entry name" value="DNA_YbaB_EbfC"/>
    <property type="match status" value="1"/>
</dbReference>
<dbReference type="PANTHER" id="PTHR33449">
    <property type="entry name" value="NUCLEOID-ASSOCIATED PROTEIN YBAB"/>
    <property type="match status" value="1"/>
</dbReference>
<dbReference type="PANTHER" id="PTHR33449:SF1">
    <property type="entry name" value="NUCLEOID-ASSOCIATED PROTEIN YBAB"/>
    <property type="match status" value="1"/>
</dbReference>
<dbReference type="Pfam" id="PF02575">
    <property type="entry name" value="YbaB_DNA_bd"/>
    <property type="match status" value="1"/>
</dbReference>
<dbReference type="PIRSF" id="PIRSF004555">
    <property type="entry name" value="UCP004555"/>
    <property type="match status" value="1"/>
</dbReference>
<dbReference type="SUPFAM" id="SSF82607">
    <property type="entry name" value="YbaB-like"/>
    <property type="match status" value="1"/>
</dbReference>
<protein>
    <recommendedName>
        <fullName evidence="1">Nucleoid-associated protein CE0210</fullName>
    </recommendedName>
</protein>
<proteinExistence type="inferred from homology"/>